<gene>
    <name type="ORF">IIV3-002R</name>
</gene>
<dbReference type="EMBL" id="DQ643392">
    <property type="protein sequence ID" value="ABF82032.1"/>
    <property type="molecule type" value="Genomic_DNA"/>
</dbReference>
<dbReference type="RefSeq" id="YP_654574.1">
    <property type="nucleotide sequence ID" value="NC_008187.1"/>
</dbReference>
<dbReference type="KEGG" id="vg:4156251"/>
<dbReference type="Proteomes" id="UP000001358">
    <property type="component" value="Genome"/>
</dbReference>
<accession>Q197F8</accession>
<protein>
    <recommendedName>
        <fullName>Uncharacterized protein 002R</fullName>
    </recommendedName>
</protein>
<organism>
    <name type="scientific">Invertebrate iridescent virus 3</name>
    <name type="common">IIV-3</name>
    <name type="synonym">Mosquito iridescent virus</name>
    <dbReference type="NCBI Taxonomy" id="345201"/>
    <lineage>
        <taxon>Viruses</taxon>
        <taxon>Varidnaviria</taxon>
        <taxon>Bamfordvirae</taxon>
        <taxon>Nucleocytoviricota</taxon>
        <taxon>Megaviricetes</taxon>
        <taxon>Pimascovirales</taxon>
        <taxon>Iridoviridae</taxon>
        <taxon>Betairidovirinae</taxon>
        <taxon>Chloriridovirus</taxon>
    </lineage>
</organism>
<keyword id="KW-1185">Reference proteome</keyword>
<evidence type="ECO:0000256" key="1">
    <source>
        <dbReference type="SAM" id="MobiDB-lite"/>
    </source>
</evidence>
<name>002R_IIV3</name>
<feature type="chain" id="PRO_0000377938" description="Uncharacterized protein 002R">
    <location>
        <begin position="1"/>
        <end position="458"/>
    </location>
</feature>
<feature type="region of interest" description="Disordered" evidence="1">
    <location>
        <begin position="339"/>
        <end position="397"/>
    </location>
</feature>
<feature type="region of interest" description="Disordered" evidence="1">
    <location>
        <begin position="434"/>
        <end position="458"/>
    </location>
</feature>
<feature type="compositionally biased region" description="Acidic residues" evidence="1">
    <location>
        <begin position="344"/>
        <end position="390"/>
    </location>
</feature>
<feature type="compositionally biased region" description="Acidic residues" evidence="1">
    <location>
        <begin position="436"/>
        <end position="458"/>
    </location>
</feature>
<proteinExistence type="predicted"/>
<reference key="1">
    <citation type="journal article" date="2006" name="J. Virol.">
        <title>Genome of invertebrate iridescent virus type 3 (mosquito iridescent virus).</title>
        <authorList>
            <person name="Delhon G."/>
            <person name="Tulman E.R."/>
            <person name="Afonso C.L."/>
            <person name="Lu Z."/>
            <person name="Becnel J.J."/>
            <person name="Moser B.A."/>
            <person name="Kutish G.F."/>
            <person name="Rock D.L."/>
        </authorList>
    </citation>
    <scope>NUCLEOTIDE SEQUENCE [LARGE SCALE GENOMIC DNA]</scope>
</reference>
<organismHost>
    <name type="scientific">Aedes vexans</name>
    <name type="common">Inland floodwater mosquito</name>
    <name type="synonym">Culex vexans</name>
    <dbReference type="NCBI Taxonomy" id="7163"/>
</organismHost>
<organismHost>
    <name type="scientific">Culex territans</name>
    <dbReference type="NCBI Taxonomy" id="42431"/>
</organismHost>
<organismHost>
    <name type="scientific">Culiseta annulata</name>
    <dbReference type="NCBI Taxonomy" id="332058"/>
</organismHost>
<organismHost>
    <name type="scientific">Ochlerotatus sollicitans</name>
    <name type="common">eastern saltmarsh mosquito</name>
    <dbReference type="NCBI Taxonomy" id="310513"/>
</organismHost>
<organismHost>
    <name type="scientific">Ochlerotatus taeniorhynchus</name>
    <name type="common">Black salt marsh mosquito</name>
    <name type="synonym">Aedes taeniorhynchus</name>
    <dbReference type="NCBI Taxonomy" id="329105"/>
</organismHost>
<organismHost>
    <name type="scientific">Psorophora ferox</name>
    <dbReference type="NCBI Taxonomy" id="7183"/>
</organismHost>
<sequence length="458" mass="53921">MASNTVSAQGGSNRPVRDFSNIQDVAQFLLFDPIWNEQPGSIVPWKMNREQALAERYPELQTSEPSEDYSGPVESLELLPLEIKLDIMQYLSWEQISWCKHPWLWTRWYKDNVVRVSAITFEDFQREYAFPEKIQEIHFTDTRAEEIKAILETTPNVTRLVIRRIDDMNYNTHGDLGLDDLEFLTHLMVEDACGFTDFWAPSLTHLTIKNLDMHPRWFGPVMDGIKSMQSTLKYLYIFETYGVNKPFVQWCTDNIETFYCTNSYRYENVPRPIYVWVLFQEDEWHGYRVEDNKFHRRYMYSTILHKRDTDWVENNPLKTPAQVEMYKFLLRISQLNRDGTGYESDSDPENEHFDDESFSSGEEDSSDEDDPTWAPDSDDSDWETETEEEPSVAARILEKGKLTITNLMKSLGFKPKPKKIQSIDRYFCSLDSNYNSEDEDFEYDSDSEDDDSDSEDDC</sequence>